<accession>B5XQD2</accession>
<feature type="chain" id="PRO_1000122144" description="Integration host factor subunit alpha">
    <location>
        <begin position="1"/>
        <end position="99"/>
    </location>
</feature>
<feature type="region of interest" description="Disordered" evidence="2">
    <location>
        <begin position="49"/>
        <end position="75"/>
    </location>
</feature>
<evidence type="ECO:0000255" key="1">
    <source>
        <dbReference type="HAMAP-Rule" id="MF_00380"/>
    </source>
</evidence>
<evidence type="ECO:0000256" key="2">
    <source>
        <dbReference type="SAM" id="MobiDB-lite"/>
    </source>
</evidence>
<protein>
    <recommendedName>
        <fullName evidence="1">Integration host factor subunit alpha</fullName>
        <shortName evidence="1">IHF-alpha</shortName>
    </recommendedName>
</protein>
<gene>
    <name evidence="1" type="primary">ihfA</name>
    <name evidence="1" type="synonym">himA</name>
    <name type="ordered locus">KPK_2144</name>
</gene>
<reference key="1">
    <citation type="journal article" date="2008" name="PLoS Genet.">
        <title>Complete genome sequence of the N2-fixing broad host range endophyte Klebsiella pneumoniae 342 and virulence predictions verified in mice.</title>
        <authorList>
            <person name="Fouts D.E."/>
            <person name="Tyler H.L."/>
            <person name="DeBoy R.T."/>
            <person name="Daugherty S."/>
            <person name="Ren Q."/>
            <person name="Badger J.H."/>
            <person name="Durkin A.S."/>
            <person name="Huot H."/>
            <person name="Shrivastava S."/>
            <person name="Kothari S."/>
            <person name="Dodson R.J."/>
            <person name="Mohamoud Y."/>
            <person name="Khouri H."/>
            <person name="Roesch L.F.W."/>
            <person name="Krogfelt K.A."/>
            <person name="Struve C."/>
            <person name="Triplett E.W."/>
            <person name="Methe B.A."/>
        </authorList>
    </citation>
    <scope>NUCLEOTIDE SEQUENCE [LARGE SCALE GENOMIC DNA]</scope>
    <source>
        <strain>342</strain>
    </source>
</reference>
<dbReference type="EMBL" id="CP000964">
    <property type="protein sequence ID" value="ACI10637.1"/>
    <property type="molecule type" value="Genomic_DNA"/>
</dbReference>
<dbReference type="SMR" id="B5XQD2"/>
<dbReference type="KEGG" id="kpe:KPK_2144"/>
<dbReference type="HOGENOM" id="CLU_105066_1_3_6"/>
<dbReference type="Proteomes" id="UP000001734">
    <property type="component" value="Chromosome"/>
</dbReference>
<dbReference type="GO" id="GO:0005829">
    <property type="term" value="C:cytosol"/>
    <property type="evidence" value="ECO:0007669"/>
    <property type="project" value="TreeGrafter"/>
</dbReference>
<dbReference type="GO" id="GO:0003677">
    <property type="term" value="F:DNA binding"/>
    <property type="evidence" value="ECO:0007669"/>
    <property type="project" value="UniProtKB-UniRule"/>
</dbReference>
<dbReference type="GO" id="GO:0030527">
    <property type="term" value="F:structural constituent of chromatin"/>
    <property type="evidence" value="ECO:0007669"/>
    <property type="project" value="InterPro"/>
</dbReference>
<dbReference type="GO" id="GO:0006310">
    <property type="term" value="P:DNA recombination"/>
    <property type="evidence" value="ECO:0007669"/>
    <property type="project" value="UniProtKB-UniRule"/>
</dbReference>
<dbReference type="GO" id="GO:0009893">
    <property type="term" value="P:positive regulation of metabolic process"/>
    <property type="evidence" value="ECO:0007669"/>
    <property type="project" value="UniProtKB-ARBA"/>
</dbReference>
<dbReference type="GO" id="GO:0006355">
    <property type="term" value="P:regulation of DNA-templated transcription"/>
    <property type="evidence" value="ECO:0007669"/>
    <property type="project" value="UniProtKB-UniRule"/>
</dbReference>
<dbReference type="GO" id="GO:0006417">
    <property type="term" value="P:regulation of translation"/>
    <property type="evidence" value="ECO:0007669"/>
    <property type="project" value="UniProtKB-UniRule"/>
</dbReference>
<dbReference type="CDD" id="cd13835">
    <property type="entry name" value="IHF_A"/>
    <property type="match status" value="1"/>
</dbReference>
<dbReference type="FunFam" id="4.10.520.10:FF:000002">
    <property type="entry name" value="Integration host factor subunit alpha"/>
    <property type="match status" value="1"/>
</dbReference>
<dbReference type="Gene3D" id="4.10.520.10">
    <property type="entry name" value="IHF-like DNA-binding proteins"/>
    <property type="match status" value="1"/>
</dbReference>
<dbReference type="HAMAP" id="MF_00380">
    <property type="entry name" value="IHF_alpha"/>
    <property type="match status" value="1"/>
</dbReference>
<dbReference type="InterPro" id="IPR000119">
    <property type="entry name" value="Hist_DNA-bd"/>
</dbReference>
<dbReference type="InterPro" id="IPR020816">
    <property type="entry name" value="Histone-like_DNA-bd_CS"/>
</dbReference>
<dbReference type="InterPro" id="IPR010992">
    <property type="entry name" value="IHF-like_DNA-bd_dom_sf"/>
</dbReference>
<dbReference type="InterPro" id="IPR005684">
    <property type="entry name" value="IHF_alpha"/>
</dbReference>
<dbReference type="NCBIfam" id="TIGR00987">
    <property type="entry name" value="himA"/>
    <property type="match status" value="1"/>
</dbReference>
<dbReference type="NCBIfam" id="NF001401">
    <property type="entry name" value="PRK00285.1"/>
    <property type="match status" value="1"/>
</dbReference>
<dbReference type="PANTHER" id="PTHR33175">
    <property type="entry name" value="DNA-BINDING PROTEIN HU"/>
    <property type="match status" value="1"/>
</dbReference>
<dbReference type="PANTHER" id="PTHR33175:SF2">
    <property type="entry name" value="INTEGRATION HOST FACTOR SUBUNIT ALPHA"/>
    <property type="match status" value="1"/>
</dbReference>
<dbReference type="Pfam" id="PF00216">
    <property type="entry name" value="Bac_DNA_binding"/>
    <property type="match status" value="1"/>
</dbReference>
<dbReference type="PRINTS" id="PR01727">
    <property type="entry name" value="DNABINDINGHU"/>
</dbReference>
<dbReference type="SMART" id="SM00411">
    <property type="entry name" value="BHL"/>
    <property type="match status" value="1"/>
</dbReference>
<dbReference type="SUPFAM" id="SSF47729">
    <property type="entry name" value="IHF-like DNA-binding proteins"/>
    <property type="match status" value="1"/>
</dbReference>
<dbReference type="PROSITE" id="PS00045">
    <property type="entry name" value="HISTONE_LIKE"/>
    <property type="match status" value="1"/>
</dbReference>
<keyword id="KW-0233">DNA recombination</keyword>
<keyword id="KW-0238">DNA-binding</keyword>
<keyword id="KW-0804">Transcription</keyword>
<keyword id="KW-0805">Transcription regulation</keyword>
<keyword id="KW-0810">Translation regulation</keyword>
<comment type="function">
    <text evidence="1">This protein is one of the two subunits of integration host factor, a specific DNA-binding protein that functions in genetic recombination as well as in transcriptional and translational control.</text>
</comment>
<comment type="subunit">
    <text evidence="1">Heterodimer of an alpha and a beta chain.</text>
</comment>
<comment type="similarity">
    <text evidence="1">Belongs to the bacterial histone-like protein family.</text>
</comment>
<proteinExistence type="inferred from homology"/>
<sequence length="99" mass="11353">MALTKAEMSEYLFDKLGLSKRDAKELVELFFEEIRRALENGEQVKLSGFGNFDLRDKNQRPGRNPKTGEDIPITARRVVTFRPGQKLKSRVENASPKDK</sequence>
<name>IHFA_KLEP3</name>
<organism>
    <name type="scientific">Klebsiella pneumoniae (strain 342)</name>
    <dbReference type="NCBI Taxonomy" id="507522"/>
    <lineage>
        <taxon>Bacteria</taxon>
        <taxon>Pseudomonadati</taxon>
        <taxon>Pseudomonadota</taxon>
        <taxon>Gammaproteobacteria</taxon>
        <taxon>Enterobacterales</taxon>
        <taxon>Enterobacteriaceae</taxon>
        <taxon>Klebsiella/Raoultella group</taxon>
        <taxon>Klebsiella</taxon>
        <taxon>Klebsiella pneumoniae complex</taxon>
    </lineage>
</organism>